<evidence type="ECO:0000255" key="1">
    <source>
        <dbReference type="HAMAP-Rule" id="MF_00563"/>
    </source>
</evidence>
<reference key="1">
    <citation type="journal article" date="2007" name="PLoS Genet.">
        <title>Genome analysis of Minibacterium massiliensis highlights the convergent evolution of water-living bacteria.</title>
        <authorList>
            <person name="Audic S."/>
            <person name="Robert C."/>
            <person name="Campagna B."/>
            <person name="Parinello H."/>
            <person name="Claverie J.-M."/>
            <person name="Raoult D."/>
            <person name="Drancourt M."/>
        </authorList>
    </citation>
    <scope>NUCLEOTIDE SEQUENCE [LARGE SCALE GENOMIC DNA]</scope>
    <source>
        <strain>Marseille</strain>
    </source>
</reference>
<gene>
    <name evidence="1" type="primary">ahcY</name>
    <name type="ordered locus">mma_3196</name>
</gene>
<accession>A6T2Y9</accession>
<dbReference type="EC" id="3.13.2.1" evidence="1"/>
<dbReference type="EMBL" id="CP000269">
    <property type="protein sequence ID" value="ABR89017.1"/>
    <property type="molecule type" value="Genomic_DNA"/>
</dbReference>
<dbReference type="RefSeq" id="WP_012081039.1">
    <property type="nucleotide sequence ID" value="NC_009659.1"/>
</dbReference>
<dbReference type="SMR" id="A6T2Y9"/>
<dbReference type="STRING" id="375286.mma_3196"/>
<dbReference type="KEGG" id="mms:mma_3196"/>
<dbReference type="eggNOG" id="COG0499">
    <property type="taxonomic scope" value="Bacteria"/>
</dbReference>
<dbReference type="HOGENOM" id="CLU_025194_2_1_4"/>
<dbReference type="OrthoDB" id="9802717at2"/>
<dbReference type="UniPathway" id="UPA00314">
    <property type="reaction ID" value="UER00076"/>
</dbReference>
<dbReference type="Proteomes" id="UP000006388">
    <property type="component" value="Chromosome"/>
</dbReference>
<dbReference type="GO" id="GO:0005829">
    <property type="term" value="C:cytosol"/>
    <property type="evidence" value="ECO:0007669"/>
    <property type="project" value="TreeGrafter"/>
</dbReference>
<dbReference type="GO" id="GO:0004013">
    <property type="term" value="F:adenosylhomocysteinase activity"/>
    <property type="evidence" value="ECO:0007669"/>
    <property type="project" value="UniProtKB-UniRule"/>
</dbReference>
<dbReference type="GO" id="GO:0071269">
    <property type="term" value="P:L-homocysteine biosynthetic process"/>
    <property type="evidence" value="ECO:0007669"/>
    <property type="project" value="UniProtKB-UniRule"/>
</dbReference>
<dbReference type="GO" id="GO:0006730">
    <property type="term" value="P:one-carbon metabolic process"/>
    <property type="evidence" value="ECO:0007669"/>
    <property type="project" value="UniProtKB-KW"/>
</dbReference>
<dbReference type="GO" id="GO:0033353">
    <property type="term" value="P:S-adenosylmethionine cycle"/>
    <property type="evidence" value="ECO:0007669"/>
    <property type="project" value="TreeGrafter"/>
</dbReference>
<dbReference type="CDD" id="cd00401">
    <property type="entry name" value="SAHH"/>
    <property type="match status" value="1"/>
</dbReference>
<dbReference type="FunFam" id="3.40.50.720:FF:000004">
    <property type="entry name" value="Adenosylhomocysteinase"/>
    <property type="match status" value="1"/>
</dbReference>
<dbReference type="Gene3D" id="3.40.50.1480">
    <property type="entry name" value="Adenosylhomocysteinase-like"/>
    <property type="match status" value="1"/>
</dbReference>
<dbReference type="Gene3D" id="3.40.50.720">
    <property type="entry name" value="NAD(P)-binding Rossmann-like Domain"/>
    <property type="match status" value="1"/>
</dbReference>
<dbReference type="HAMAP" id="MF_00563">
    <property type="entry name" value="AdoHcyase"/>
    <property type="match status" value="1"/>
</dbReference>
<dbReference type="InterPro" id="IPR042172">
    <property type="entry name" value="Adenosylhomocyst_ase-like_sf"/>
</dbReference>
<dbReference type="InterPro" id="IPR000043">
    <property type="entry name" value="Adenosylhomocysteinase-like"/>
</dbReference>
<dbReference type="InterPro" id="IPR015878">
    <property type="entry name" value="Ado_hCys_hydrolase_NAD-bd"/>
</dbReference>
<dbReference type="InterPro" id="IPR036291">
    <property type="entry name" value="NAD(P)-bd_dom_sf"/>
</dbReference>
<dbReference type="InterPro" id="IPR020082">
    <property type="entry name" value="S-Ado-L-homoCys_hydrolase_CS"/>
</dbReference>
<dbReference type="NCBIfam" id="TIGR00936">
    <property type="entry name" value="ahcY"/>
    <property type="match status" value="1"/>
</dbReference>
<dbReference type="NCBIfam" id="NF004005">
    <property type="entry name" value="PRK05476.2-3"/>
    <property type="match status" value="1"/>
</dbReference>
<dbReference type="PANTHER" id="PTHR23420">
    <property type="entry name" value="ADENOSYLHOMOCYSTEINASE"/>
    <property type="match status" value="1"/>
</dbReference>
<dbReference type="PANTHER" id="PTHR23420:SF0">
    <property type="entry name" value="ADENOSYLHOMOCYSTEINASE"/>
    <property type="match status" value="1"/>
</dbReference>
<dbReference type="Pfam" id="PF05221">
    <property type="entry name" value="AdoHcyase"/>
    <property type="match status" value="1"/>
</dbReference>
<dbReference type="Pfam" id="PF00670">
    <property type="entry name" value="AdoHcyase_NAD"/>
    <property type="match status" value="1"/>
</dbReference>
<dbReference type="PIRSF" id="PIRSF001109">
    <property type="entry name" value="Ad_hcy_hydrolase"/>
    <property type="match status" value="1"/>
</dbReference>
<dbReference type="SMART" id="SM00996">
    <property type="entry name" value="AdoHcyase"/>
    <property type="match status" value="1"/>
</dbReference>
<dbReference type="SMART" id="SM00997">
    <property type="entry name" value="AdoHcyase_NAD"/>
    <property type="match status" value="1"/>
</dbReference>
<dbReference type="SUPFAM" id="SSF52283">
    <property type="entry name" value="Formate/glycerate dehydrogenase catalytic domain-like"/>
    <property type="match status" value="1"/>
</dbReference>
<dbReference type="SUPFAM" id="SSF51735">
    <property type="entry name" value="NAD(P)-binding Rossmann-fold domains"/>
    <property type="match status" value="1"/>
</dbReference>
<dbReference type="PROSITE" id="PS00738">
    <property type="entry name" value="ADOHCYASE_1"/>
    <property type="match status" value="1"/>
</dbReference>
<dbReference type="PROSITE" id="PS00739">
    <property type="entry name" value="ADOHCYASE_2"/>
    <property type="match status" value="1"/>
</dbReference>
<keyword id="KW-0963">Cytoplasm</keyword>
<keyword id="KW-0378">Hydrolase</keyword>
<keyword id="KW-0520">NAD</keyword>
<keyword id="KW-0554">One-carbon metabolism</keyword>
<feature type="chain" id="PRO_1000129286" description="Adenosylhomocysteinase">
    <location>
        <begin position="1"/>
        <end position="479"/>
    </location>
</feature>
<feature type="binding site" evidence="1">
    <location>
        <position position="65"/>
    </location>
    <ligand>
        <name>substrate</name>
    </ligand>
</feature>
<feature type="binding site" evidence="1">
    <location>
        <position position="145"/>
    </location>
    <ligand>
        <name>substrate</name>
    </ligand>
</feature>
<feature type="binding site" evidence="1">
    <location>
        <position position="205"/>
    </location>
    <ligand>
        <name>substrate</name>
    </ligand>
</feature>
<feature type="binding site" evidence="1">
    <location>
        <begin position="206"/>
        <end position="208"/>
    </location>
    <ligand>
        <name>NAD(+)</name>
        <dbReference type="ChEBI" id="CHEBI:57540"/>
    </ligand>
</feature>
<feature type="binding site" evidence="1">
    <location>
        <position position="235"/>
    </location>
    <ligand>
        <name>substrate</name>
    </ligand>
</feature>
<feature type="binding site" evidence="1">
    <location>
        <position position="239"/>
    </location>
    <ligand>
        <name>substrate</name>
    </ligand>
</feature>
<feature type="binding site" evidence="1">
    <location>
        <position position="240"/>
    </location>
    <ligand>
        <name>NAD(+)</name>
        <dbReference type="ChEBI" id="CHEBI:57540"/>
    </ligand>
</feature>
<feature type="binding site" evidence="1">
    <location>
        <begin position="269"/>
        <end position="274"/>
    </location>
    <ligand>
        <name>NAD(+)</name>
        <dbReference type="ChEBI" id="CHEBI:57540"/>
    </ligand>
</feature>
<feature type="binding site" evidence="1">
    <location>
        <position position="292"/>
    </location>
    <ligand>
        <name>NAD(+)</name>
        <dbReference type="ChEBI" id="CHEBI:57540"/>
    </ligand>
</feature>
<feature type="binding site" evidence="1">
    <location>
        <position position="327"/>
    </location>
    <ligand>
        <name>NAD(+)</name>
        <dbReference type="ChEBI" id="CHEBI:57540"/>
    </ligand>
</feature>
<feature type="binding site" evidence="1">
    <location>
        <begin position="348"/>
        <end position="350"/>
    </location>
    <ligand>
        <name>NAD(+)</name>
        <dbReference type="ChEBI" id="CHEBI:57540"/>
    </ligand>
</feature>
<feature type="binding site" evidence="1">
    <location>
        <position position="393"/>
    </location>
    <ligand>
        <name>NAD(+)</name>
        <dbReference type="ChEBI" id="CHEBI:57540"/>
    </ligand>
</feature>
<sequence>MNAAVMTSPTNFSDYVIADLSLSAWGDKEIRIAETEMPGLMAIREEFAAAQPLKGARITGSIHMTIQTAVLIQTLEALGAKVRWASCNIYSTQDHAAAAIAAAGTPVFAVKGETLDDYWEYTHRIFEWPNDDKGAPVYSNMILDDGGDATLLLHLGTRAEKDASVLNNPGSEEEICLFNSIKKHLAVDATWYSKRLPQILGVTEETTTGVHRLYQMHKEGKLAFPAINVNDSVTKSKFDNLYGCRESLVDGIKRATDVMIAGKVAVIAGYGDVGKGSAQAMRALSAQVWVTEIDPICALQAAMEGYRVVTMEYAAEHGDIFVTCTGNYHVITHEHMKKMKDQAIVCNIGHFDNEIEVAALKQYTWENIKPQVDHIIFPDGKRIILLAEGRLVNLGCGTGHPSYVMSSSFANQTIAQIELYANTKNYPVGVYTLPKHLDEKVARLQLKKLNAQLTTLTTEQANYIGVQQTGPYKPEHYRY</sequence>
<name>SAHH_JANMA</name>
<proteinExistence type="inferred from homology"/>
<organism>
    <name type="scientific">Janthinobacterium sp. (strain Marseille)</name>
    <name type="common">Minibacterium massiliensis</name>
    <dbReference type="NCBI Taxonomy" id="375286"/>
    <lineage>
        <taxon>Bacteria</taxon>
        <taxon>Pseudomonadati</taxon>
        <taxon>Pseudomonadota</taxon>
        <taxon>Betaproteobacteria</taxon>
        <taxon>Burkholderiales</taxon>
        <taxon>Oxalobacteraceae</taxon>
        <taxon>Janthinobacterium</taxon>
    </lineage>
</organism>
<protein>
    <recommendedName>
        <fullName evidence="1">Adenosylhomocysteinase</fullName>
        <ecNumber evidence="1">3.13.2.1</ecNumber>
    </recommendedName>
    <alternativeName>
        <fullName evidence="1">S-adenosyl-L-homocysteine hydrolase</fullName>
        <shortName evidence="1">AdoHcyase</shortName>
    </alternativeName>
</protein>
<comment type="function">
    <text evidence="1">May play a key role in the regulation of the intracellular concentration of adenosylhomocysteine.</text>
</comment>
<comment type="catalytic activity">
    <reaction evidence="1">
        <text>S-adenosyl-L-homocysteine + H2O = L-homocysteine + adenosine</text>
        <dbReference type="Rhea" id="RHEA:21708"/>
        <dbReference type="ChEBI" id="CHEBI:15377"/>
        <dbReference type="ChEBI" id="CHEBI:16335"/>
        <dbReference type="ChEBI" id="CHEBI:57856"/>
        <dbReference type="ChEBI" id="CHEBI:58199"/>
        <dbReference type="EC" id="3.13.2.1"/>
    </reaction>
</comment>
<comment type="cofactor">
    <cofactor evidence="1">
        <name>NAD(+)</name>
        <dbReference type="ChEBI" id="CHEBI:57540"/>
    </cofactor>
    <text evidence="1">Binds 1 NAD(+) per subunit.</text>
</comment>
<comment type="pathway">
    <text evidence="1">Amino-acid biosynthesis; L-homocysteine biosynthesis; L-homocysteine from S-adenosyl-L-homocysteine: step 1/1.</text>
</comment>
<comment type="subcellular location">
    <subcellularLocation>
        <location evidence="1">Cytoplasm</location>
    </subcellularLocation>
</comment>
<comment type="similarity">
    <text evidence="1">Belongs to the adenosylhomocysteinase family.</text>
</comment>